<organism>
    <name type="scientific">Methanococcus maripaludis (strain DSM 14266 / JCM 13030 / NBRC 101832 / S2 / LL)</name>
    <dbReference type="NCBI Taxonomy" id="267377"/>
    <lineage>
        <taxon>Archaea</taxon>
        <taxon>Methanobacteriati</taxon>
        <taxon>Methanobacteriota</taxon>
        <taxon>Methanomada group</taxon>
        <taxon>Methanococci</taxon>
        <taxon>Methanococcales</taxon>
        <taxon>Methanococcaceae</taxon>
        <taxon>Methanococcus</taxon>
    </lineage>
</organism>
<feature type="chain" id="PRO_0000423062" description="L-lysine 2,3-aminomutase">
    <location>
        <begin position="1"/>
        <end position="433"/>
    </location>
</feature>
<feature type="domain" description="Radical SAM core" evidence="2">
    <location>
        <begin position="122"/>
        <end position="334"/>
    </location>
</feature>
<feature type="binding site" evidence="1">
    <location>
        <position position="136"/>
    </location>
    <ligand>
        <name>[4Fe-4S] cluster</name>
        <dbReference type="ChEBI" id="CHEBI:49883"/>
        <note>4Fe-4S-S-AdoMet</note>
    </ligand>
</feature>
<feature type="binding site" evidence="1">
    <location>
        <position position="140"/>
    </location>
    <ligand>
        <name>[4Fe-4S] cluster</name>
        <dbReference type="ChEBI" id="CHEBI:49883"/>
        <note>4Fe-4S-S-AdoMet</note>
    </ligand>
</feature>
<feature type="binding site" evidence="1">
    <location>
        <position position="143"/>
    </location>
    <ligand>
        <name>[4Fe-4S] cluster</name>
        <dbReference type="ChEBI" id="CHEBI:49883"/>
        <note>4Fe-4S-S-AdoMet</note>
    </ligand>
</feature>
<feature type="binding site" evidence="1">
    <location>
        <position position="279"/>
    </location>
    <ligand>
        <name>Zn(2+)</name>
        <dbReference type="ChEBI" id="CHEBI:29105"/>
    </ligand>
</feature>
<feature type="binding site" evidence="1">
    <location>
        <position position="389"/>
    </location>
    <ligand>
        <name>Zn(2+)</name>
        <dbReference type="ChEBI" id="CHEBI:29105"/>
    </ligand>
</feature>
<feature type="binding site" evidence="1">
    <location>
        <position position="392"/>
    </location>
    <ligand>
        <name>Zn(2+)</name>
        <dbReference type="ChEBI" id="CHEBI:29105"/>
    </ligand>
</feature>
<feature type="binding site" evidence="1">
    <location>
        <position position="396"/>
    </location>
    <ligand>
        <name>Zn(2+)</name>
        <dbReference type="ChEBI" id="CHEBI:29105"/>
    </ligand>
</feature>
<feature type="modified residue" description="N6-(pyridoxal phosphate)lysine" evidence="1">
    <location>
        <position position="348"/>
    </location>
</feature>
<accession>Q6LYX4</accession>
<name>ABLA_METMP</name>
<comment type="function">
    <text evidence="3">Catalyzes the interconversion of L-alpha-lysine and L-beta-lysine. Is involved in the biosynthesis pathway of N6-acetyl-beta-lysine, a compatible solute produced by methanogenic archaea that helps cells to cope with salt stress.</text>
</comment>
<comment type="catalytic activity">
    <reaction>
        <text>L-lysine = (3S)-3,6-diaminohexanoate</text>
        <dbReference type="Rhea" id="RHEA:19177"/>
        <dbReference type="ChEBI" id="CHEBI:32551"/>
        <dbReference type="ChEBI" id="CHEBI:57434"/>
        <dbReference type="EC" id="5.4.3.2"/>
    </reaction>
</comment>
<comment type="cofactor">
    <cofactor evidence="1">
        <name>[4Fe-4S] cluster</name>
        <dbReference type="ChEBI" id="CHEBI:49883"/>
    </cofactor>
    <text evidence="1">Binds 1 [4Fe-4S] cluster. The cluster is coordinated with 3 cysteines and an exchangeable S-adenosyl-L-methionine.</text>
</comment>
<comment type="cofactor">
    <cofactor evidence="1">
        <name>pyridoxal 5'-phosphate</name>
        <dbReference type="ChEBI" id="CHEBI:597326"/>
    </cofactor>
</comment>
<comment type="cofactor">
    <cofactor evidence="1">
        <name>Zn(2+)</name>
        <dbReference type="ChEBI" id="CHEBI:29105"/>
    </cofactor>
    <text evidence="1">Binds 1 zinc ion per subunit.</text>
</comment>
<comment type="disruption phenotype">
    <text evidence="3">Cells lacking both ablA and ablB no longer produce N6-acetyl-beta-lysine and are incapable of growth at high salt concentrations.</text>
</comment>
<comment type="similarity">
    <text evidence="4">Belongs to the radical SAM superfamily. KamA family.</text>
</comment>
<dbReference type="EC" id="5.4.3.2"/>
<dbReference type="EMBL" id="BX950229">
    <property type="protein sequence ID" value="CAF30417.1"/>
    <property type="molecule type" value="Genomic_DNA"/>
</dbReference>
<dbReference type="RefSeq" id="WP_011170805.1">
    <property type="nucleotide sequence ID" value="NC_005791.1"/>
</dbReference>
<dbReference type="SMR" id="Q6LYX4"/>
<dbReference type="STRING" id="267377.MMP0861"/>
<dbReference type="EnsemblBacteria" id="CAF30417">
    <property type="protein sequence ID" value="CAF30417"/>
    <property type="gene ID" value="MMP0861"/>
</dbReference>
<dbReference type="GeneID" id="2762078"/>
<dbReference type="KEGG" id="mmp:MMP0861"/>
<dbReference type="PATRIC" id="fig|267377.15.peg.886"/>
<dbReference type="eggNOG" id="arCOG03246">
    <property type="taxonomic scope" value="Archaea"/>
</dbReference>
<dbReference type="HOGENOM" id="CLU_032161_0_0_2"/>
<dbReference type="OrthoDB" id="21308at2157"/>
<dbReference type="BRENDA" id="5.4.3.2">
    <property type="organism ID" value="3262"/>
</dbReference>
<dbReference type="Proteomes" id="UP000000590">
    <property type="component" value="Chromosome"/>
</dbReference>
<dbReference type="GO" id="GO:0051539">
    <property type="term" value="F:4 iron, 4 sulfur cluster binding"/>
    <property type="evidence" value="ECO:0007669"/>
    <property type="project" value="UniProtKB-KW"/>
</dbReference>
<dbReference type="GO" id="GO:0050066">
    <property type="term" value="F:L-lysine 2,3-aminomutase activity"/>
    <property type="evidence" value="ECO:0007669"/>
    <property type="project" value="UniProtKB-EC"/>
</dbReference>
<dbReference type="GO" id="GO:0046872">
    <property type="term" value="F:metal ion binding"/>
    <property type="evidence" value="ECO:0007669"/>
    <property type="project" value="UniProtKB-KW"/>
</dbReference>
<dbReference type="CDD" id="cd01335">
    <property type="entry name" value="Radical_SAM"/>
    <property type="match status" value="1"/>
</dbReference>
<dbReference type="FunFam" id="3.20.20.70:FF:000095">
    <property type="entry name" value="Lysine 2,3-aminomutase"/>
    <property type="match status" value="1"/>
</dbReference>
<dbReference type="Gene3D" id="6.10.140.1170">
    <property type="match status" value="1"/>
</dbReference>
<dbReference type="Gene3D" id="6.20.120.40">
    <property type="match status" value="1"/>
</dbReference>
<dbReference type="Gene3D" id="3.20.20.70">
    <property type="entry name" value="Aldolase class I"/>
    <property type="match status" value="1"/>
</dbReference>
<dbReference type="InterPro" id="IPR013785">
    <property type="entry name" value="Aldolase_TIM"/>
</dbReference>
<dbReference type="InterPro" id="IPR025895">
    <property type="entry name" value="LAM_C_dom"/>
</dbReference>
<dbReference type="InterPro" id="IPR003739">
    <property type="entry name" value="Lys_aminomutase/Glu_NH3_mut"/>
</dbReference>
<dbReference type="InterPro" id="IPR022459">
    <property type="entry name" value="Lysine_aminomutase"/>
</dbReference>
<dbReference type="InterPro" id="IPR007197">
    <property type="entry name" value="rSAM"/>
</dbReference>
<dbReference type="NCBIfam" id="TIGR00238">
    <property type="entry name" value="KamA family radical SAM protein"/>
    <property type="match status" value="1"/>
</dbReference>
<dbReference type="NCBIfam" id="TIGR03820">
    <property type="entry name" value="lys_2_3_AblA"/>
    <property type="match status" value="1"/>
</dbReference>
<dbReference type="PANTHER" id="PTHR30538:SF1">
    <property type="entry name" value="L-LYSINE 2,3-AMINOMUTASE"/>
    <property type="match status" value="1"/>
</dbReference>
<dbReference type="PANTHER" id="PTHR30538">
    <property type="entry name" value="LYSINE 2,3-AMINOMUTASE-RELATED"/>
    <property type="match status" value="1"/>
</dbReference>
<dbReference type="Pfam" id="PF13353">
    <property type="entry name" value="Fer4_12"/>
    <property type="match status" value="1"/>
</dbReference>
<dbReference type="Pfam" id="PF12544">
    <property type="entry name" value="LAM_C"/>
    <property type="match status" value="1"/>
</dbReference>
<dbReference type="Pfam" id="PF04055">
    <property type="entry name" value="Radical_SAM"/>
    <property type="match status" value="1"/>
</dbReference>
<dbReference type="PIRSF" id="PIRSF004911">
    <property type="entry name" value="DUF160"/>
    <property type="match status" value="1"/>
</dbReference>
<dbReference type="SFLD" id="SFLDF00283">
    <property type="entry name" value="L-lysine_2_3-aminomutase_(LAM"/>
    <property type="match status" value="1"/>
</dbReference>
<dbReference type="SFLD" id="SFLDG01070">
    <property type="entry name" value="PLP-dependent"/>
    <property type="match status" value="1"/>
</dbReference>
<dbReference type="SUPFAM" id="SSF102114">
    <property type="entry name" value="Radical SAM enzymes"/>
    <property type="match status" value="1"/>
</dbReference>
<dbReference type="PROSITE" id="PS51918">
    <property type="entry name" value="RADICAL_SAM"/>
    <property type="match status" value="1"/>
</dbReference>
<protein>
    <recommendedName>
        <fullName>L-lysine 2,3-aminomutase</fullName>
        <shortName>LAM</shortName>
        <ecNumber>5.4.3.2</ecNumber>
    </recommendedName>
</protein>
<proteinExistence type="inferred from homology"/>
<keyword id="KW-0004">4Fe-4S</keyword>
<keyword id="KW-0408">Iron</keyword>
<keyword id="KW-0411">Iron-sulfur</keyword>
<keyword id="KW-0413">Isomerase</keyword>
<keyword id="KW-0479">Metal-binding</keyword>
<keyword id="KW-0663">Pyridoxal phosphate</keyword>
<keyword id="KW-1185">Reference proteome</keyword>
<keyword id="KW-0949">S-adenosyl-L-methionine</keyword>
<keyword id="KW-0862">Zinc</keyword>
<sequence length="433" mass="49186">MNELSDESILKYTKKISENATIDNWNDYKWQLSNSIKDVDTLENFLGITFDEKEKTEIQKAIDVFPMSITPYYASLIDIKNLGKDPIYKQSVASSKELILENFEMEDPLSEDEDSPVIGITHRYPDRVLFYINPNCAMYCRHCTRKRKVSEKSSNPSKEEIQKAIDYIKNNNKIRDVLLSGGDPLLLSDEFLDWILSEISSIKHVELIRIGSRVPVVLPQRITDNLVNVLKKYHPIWINTHYNHPVEITKESKKALDKLSDSGIPLGNQTVLLAGVNDCPYVMRKLNQKLVSSRVRPYYLYQCDLSKGISHFRTSVSKGLEIIESLIGHTTGFAVPRYVVDAPGGGGKIPVMPNYVVSWGSDRVILRNYEGIITSYVEPSDYGGCSKNCDTCDRMCIGDFEINQTGIEKLITDVDNSISLIPENNERVARRDD</sequence>
<gene>
    <name type="primary">ablA</name>
    <name type="synonym">kamA</name>
    <name type="ordered locus">MMP0861</name>
</gene>
<reference key="1">
    <citation type="journal article" date="2004" name="J. Bacteriol.">
        <title>Complete genome sequence of the genetically tractable hydrogenotrophic methanogen Methanococcus maripaludis.</title>
        <authorList>
            <person name="Hendrickson E.L."/>
            <person name="Kaul R."/>
            <person name="Zhou Y."/>
            <person name="Bovee D."/>
            <person name="Chapman P."/>
            <person name="Chung J."/>
            <person name="Conway de Macario E."/>
            <person name="Dodsworth J.A."/>
            <person name="Gillett W."/>
            <person name="Graham D.E."/>
            <person name="Hackett M."/>
            <person name="Haydock A.K."/>
            <person name="Kang A."/>
            <person name="Land M.L."/>
            <person name="Levy R."/>
            <person name="Lie T.J."/>
            <person name="Major T.A."/>
            <person name="Moore B.C."/>
            <person name="Porat I."/>
            <person name="Palmeiri A."/>
            <person name="Rouse G."/>
            <person name="Saenphimmachak C."/>
            <person name="Soell D."/>
            <person name="Van Dien S."/>
            <person name="Wang T."/>
            <person name="Whitman W.B."/>
            <person name="Xia Q."/>
            <person name="Zhang Y."/>
            <person name="Larimer F.W."/>
            <person name="Olson M.V."/>
            <person name="Leigh J.A."/>
        </authorList>
    </citation>
    <scope>NUCLEOTIDE SEQUENCE [LARGE SCALE GENOMIC DNA]</scope>
    <source>
        <strain>DSM 14266 / JCM 13030 / NBRC 101832 / S2 / LL</strain>
    </source>
</reference>
<reference key="2">
    <citation type="journal article" date="2003" name="Appl. Environ. Microbiol.">
        <title>Lysine-2,3-aminomutase and beta-lysine acetyltransferase genes of methanogenic archaea are salt induced and are essential for the biosynthesis of Nepsilon-acetyl-beta-lysine and growth at high salinity.</title>
        <authorList>
            <person name="Pfluger K."/>
            <person name="Baumann S."/>
            <person name="Gottschalk G."/>
            <person name="Lin W."/>
            <person name="Santos H."/>
            <person name="Muller V."/>
        </authorList>
    </citation>
    <scope>IDENTIFICATION</scope>
    <scope>FUNCTION</scope>
    <scope>GENE NAME</scope>
    <scope>DISRUPTION PHENOTYPE</scope>
    <source>
        <strain>DSM 14266 / JCM 13030 / NBRC 101832 / S2 / LL</strain>
    </source>
</reference>
<evidence type="ECO:0000250" key="1"/>
<evidence type="ECO:0000255" key="2">
    <source>
        <dbReference type="PROSITE-ProRule" id="PRU01266"/>
    </source>
</evidence>
<evidence type="ECO:0000269" key="3">
    <source>
    </source>
</evidence>
<evidence type="ECO:0000305" key="4"/>